<name>ZAPB_ECOSM</name>
<evidence type="ECO:0000255" key="1">
    <source>
        <dbReference type="HAMAP-Rule" id="MF_01196"/>
    </source>
</evidence>
<evidence type="ECO:0000256" key="2">
    <source>
        <dbReference type="SAM" id="MobiDB-lite"/>
    </source>
</evidence>
<accession>B1LNN1</accession>
<comment type="function">
    <text evidence="1">Non-essential, abundant cell division factor that is required for proper Z-ring formation. It is recruited early to the divisome by direct interaction with FtsZ, stimulating Z-ring assembly and thereby promoting cell division earlier in the cell cycle. Its recruitment to the Z-ring requires functional FtsA or ZipA.</text>
</comment>
<comment type="subunit">
    <text evidence="1">Homodimer. The ends of the coiled-coil dimer bind to each other, forming polymers. Interacts with FtsZ.</text>
</comment>
<comment type="subcellular location">
    <subcellularLocation>
        <location evidence="1">Cytoplasm</location>
    </subcellularLocation>
    <text evidence="1">Localizes to the septum at mid-cell, in a FtsZ-like pattern.</text>
</comment>
<comment type="similarity">
    <text evidence="1">Belongs to the ZapB family.</text>
</comment>
<feature type="chain" id="PRO_1000138437" description="Cell division protein ZapB">
    <location>
        <begin position="1"/>
        <end position="81"/>
    </location>
</feature>
<feature type="region of interest" description="Disordered" evidence="2">
    <location>
        <begin position="36"/>
        <end position="67"/>
    </location>
</feature>
<feature type="coiled-coil region" evidence="1">
    <location>
        <begin position="5"/>
        <end position="81"/>
    </location>
</feature>
<feature type="compositionally biased region" description="Polar residues" evidence="2">
    <location>
        <begin position="37"/>
        <end position="47"/>
    </location>
</feature>
<feature type="compositionally biased region" description="Basic and acidic residues" evidence="2">
    <location>
        <begin position="48"/>
        <end position="62"/>
    </location>
</feature>
<feature type="modified residue" description="N6-acetyllysine" evidence="1">
    <location>
        <position position="10"/>
    </location>
</feature>
<keyword id="KW-0007">Acetylation</keyword>
<keyword id="KW-0131">Cell cycle</keyword>
<keyword id="KW-0132">Cell division</keyword>
<keyword id="KW-0175">Coiled coil</keyword>
<keyword id="KW-0963">Cytoplasm</keyword>
<keyword id="KW-0717">Septation</keyword>
<proteinExistence type="inferred from homology"/>
<protein>
    <recommendedName>
        <fullName evidence="1">Cell division protein ZapB</fullName>
    </recommendedName>
</protein>
<gene>
    <name evidence="1" type="primary">zapB</name>
    <name type="ordered locus">EcSMS35_4368</name>
</gene>
<dbReference type="EMBL" id="CP000970">
    <property type="protein sequence ID" value="ACB19739.1"/>
    <property type="molecule type" value="Genomic_DNA"/>
</dbReference>
<dbReference type="RefSeq" id="WP_001296623.1">
    <property type="nucleotide sequence ID" value="NC_010498.1"/>
</dbReference>
<dbReference type="SMR" id="B1LNN1"/>
<dbReference type="GeneID" id="93777970"/>
<dbReference type="KEGG" id="ecm:EcSMS35_4368"/>
<dbReference type="HOGENOM" id="CLU_171174_2_0_6"/>
<dbReference type="Proteomes" id="UP000007011">
    <property type="component" value="Chromosome"/>
</dbReference>
<dbReference type="GO" id="GO:0005737">
    <property type="term" value="C:cytoplasm"/>
    <property type="evidence" value="ECO:0007669"/>
    <property type="project" value="UniProtKB-SubCell"/>
</dbReference>
<dbReference type="GO" id="GO:0000917">
    <property type="term" value="P:division septum assembly"/>
    <property type="evidence" value="ECO:0007669"/>
    <property type="project" value="UniProtKB-KW"/>
</dbReference>
<dbReference type="GO" id="GO:0043093">
    <property type="term" value="P:FtsZ-dependent cytokinesis"/>
    <property type="evidence" value="ECO:0007669"/>
    <property type="project" value="UniProtKB-UniRule"/>
</dbReference>
<dbReference type="FunFam" id="1.20.5.340:FF:000014">
    <property type="entry name" value="Cell division protein ZapB"/>
    <property type="match status" value="1"/>
</dbReference>
<dbReference type="Gene3D" id="1.20.5.340">
    <property type="match status" value="1"/>
</dbReference>
<dbReference type="HAMAP" id="MF_01196">
    <property type="entry name" value="ZapB"/>
    <property type="match status" value="1"/>
</dbReference>
<dbReference type="InterPro" id="IPR009252">
    <property type="entry name" value="Cell_div_ZapB"/>
</dbReference>
<dbReference type="NCBIfam" id="NF011951">
    <property type="entry name" value="PRK15422.1"/>
    <property type="match status" value="1"/>
</dbReference>
<dbReference type="Pfam" id="PF06005">
    <property type="entry name" value="ZapB"/>
    <property type="match status" value="1"/>
</dbReference>
<reference key="1">
    <citation type="journal article" date="2008" name="J. Bacteriol.">
        <title>Insights into the environmental resistance gene pool from the genome sequence of the multidrug-resistant environmental isolate Escherichia coli SMS-3-5.</title>
        <authorList>
            <person name="Fricke W.F."/>
            <person name="Wright M.S."/>
            <person name="Lindell A.H."/>
            <person name="Harkins D.M."/>
            <person name="Baker-Austin C."/>
            <person name="Ravel J."/>
            <person name="Stepanauskas R."/>
        </authorList>
    </citation>
    <scope>NUCLEOTIDE SEQUENCE [LARGE SCALE GENOMIC DNA]</scope>
    <source>
        <strain>SMS-3-5 / SECEC</strain>
    </source>
</reference>
<organism>
    <name type="scientific">Escherichia coli (strain SMS-3-5 / SECEC)</name>
    <dbReference type="NCBI Taxonomy" id="439855"/>
    <lineage>
        <taxon>Bacteria</taxon>
        <taxon>Pseudomonadati</taxon>
        <taxon>Pseudomonadota</taxon>
        <taxon>Gammaproteobacteria</taxon>
        <taxon>Enterobacterales</taxon>
        <taxon>Enterobacteriaceae</taxon>
        <taxon>Escherichia</taxon>
    </lineage>
</organism>
<sequence length="81" mass="9635">MTMSLEVFEKLEAKVQQAIDTITLLQMEIEELKEKNNSLSQEVQNAQHQREELERENNHLKEQQNGWQERLQALLGRMEEV</sequence>